<comment type="function">
    <text evidence="1">Catalyzes the attachment of glutamate to tRNA(Glu) in a two-step reaction: glutamate is first activated by ATP to form Glu-AMP and then transferred to the acceptor end of tRNA(Glu).</text>
</comment>
<comment type="catalytic activity">
    <reaction evidence="1">
        <text>tRNA(Glu) + L-glutamate + ATP = L-glutamyl-tRNA(Glu) + AMP + diphosphate</text>
        <dbReference type="Rhea" id="RHEA:23540"/>
        <dbReference type="Rhea" id="RHEA-COMP:9663"/>
        <dbReference type="Rhea" id="RHEA-COMP:9680"/>
        <dbReference type="ChEBI" id="CHEBI:29985"/>
        <dbReference type="ChEBI" id="CHEBI:30616"/>
        <dbReference type="ChEBI" id="CHEBI:33019"/>
        <dbReference type="ChEBI" id="CHEBI:78442"/>
        <dbReference type="ChEBI" id="CHEBI:78520"/>
        <dbReference type="ChEBI" id="CHEBI:456215"/>
        <dbReference type="EC" id="6.1.1.17"/>
    </reaction>
</comment>
<comment type="subunit">
    <text evidence="1">Monomer.</text>
</comment>
<comment type="subcellular location">
    <subcellularLocation>
        <location evidence="1">Cytoplasm</location>
    </subcellularLocation>
</comment>
<comment type="similarity">
    <text evidence="1">Belongs to the class-I aminoacyl-tRNA synthetase family. Glutamate--tRNA ligase type 1 subfamily.</text>
</comment>
<proteinExistence type="inferred from homology"/>
<protein>
    <recommendedName>
        <fullName evidence="1">Glutamate--tRNA ligase</fullName>
        <ecNumber evidence="1">6.1.1.17</ecNumber>
    </recommendedName>
    <alternativeName>
        <fullName evidence="1">Glutamyl-tRNA synthetase</fullName>
        <shortName evidence="1">GluRS</shortName>
    </alternativeName>
</protein>
<organism>
    <name type="scientific">Lactobacillus acidophilus (strain ATCC 700396 / NCK56 / N2 / NCFM)</name>
    <dbReference type="NCBI Taxonomy" id="272621"/>
    <lineage>
        <taxon>Bacteria</taxon>
        <taxon>Bacillati</taxon>
        <taxon>Bacillota</taxon>
        <taxon>Bacilli</taxon>
        <taxon>Lactobacillales</taxon>
        <taxon>Lactobacillaceae</taxon>
        <taxon>Lactobacillus</taxon>
    </lineage>
</organism>
<accession>Q5FM35</accession>
<reference key="1">
    <citation type="journal article" date="2005" name="Proc. Natl. Acad. Sci. U.S.A.">
        <title>Complete genome sequence of the probiotic lactic acid bacterium Lactobacillus acidophilus NCFM.</title>
        <authorList>
            <person name="Altermann E."/>
            <person name="Russell W.M."/>
            <person name="Azcarate-Peril M.A."/>
            <person name="Barrangou R."/>
            <person name="Buck B.L."/>
            <person name="McAuliffe O."/>
            <person name="Souther N."/>
            <person name="Dobson A."/>
            <person name="Duong T."/>
            <person name="Callanan M."/>
            <person name="Lick S."/>
            <person name="Hamrick A."/>
            <person name="Cano R."/>
            <person name="Klaenhammer T.R."/>
        </authorList>
    </citation>
    <scope>NUCLEOTIDE SEQUENCE [LARGE SCALE GENOMIC DNA]</scope>
    <source>
        <strain>ATCC 700396 / NCK56 / N2 / NCFM</strain>
    </source>
</reference>
<keyword id="KW-0030">Aminoacyl-tRNA synthetase</keyword>
<keyword id="KW-0067">ATP-binding</keyword>
<keyword id="KW-0963">Cytoplasm</keyword>
<keyword id="KW-0436">Ligase</keyword>
<keyword id="KW-0547">Nucleotide-binding</keyword>
<keyword id="KW-0648">Protein biosynthesis</keyword>
<keyword id="KW-1185">Reference proteome</keyword>
<name>SYE_LACAC</name>
<gene>
    <name evidence="1" type="primary">gltX</name>
    <name type="ordered locus">LBA0347</name>
</gene>
<sequence>MAKEKIRVRYAPSPTGHLHIGNARTALFNYLFARHNKGTMVLRIEDSDQKRNVKGGSKSQMENLHWLGIDWDEGPDKGGDYGPYRQSERKDIYQKYIDQLLEEGKAYYSYKTEEELEEQREEQRAMGVAPHYTYEYEGMTADEIKQAQEEAKAKGLKPVVRIHIPEMETYSWDDIVKGHLEFESDTIGGDFVIQKRDGMPTYNFAVVVDDHLMKITHVLRGDDHVSNTPKQLVVYEALGWEPPKFGHMTLIINSETGKKLSKRDESVLQFIEQYRDLGYLPDAMFNFITLLGWSPKGENEIFTKREFIKQFDPARLSKSPAAFDQKKLEWINNQYIKKADRDTLLDLSLNNLQEAGLVDEHPTPEKMEWIRQLVNIYAVQMSYTKQIVDMAKIFFEDAKELSDEEIEEIKNDDGRAVIEEFKKQLDLIPRFTAVQIMGAIQATRKATGIKGRKLFMPVRIATTRSMVGPGIGEAMELLGKDRVVKHIDLTLKQMSDNNL</sequence>
<feature type="chain" id="PRO_0000119581" description="Glutamate--tRNA ligase">
    <location>
        <begin position="1"/>
        <end position="499"/>
    </location>
</feature>
<feature type="short sequence motif" description="'HIGH' region" evidence="1">
    <location>
        <begin position="12"/>
        <end position="22"/>
    </location>
</feature>
<feature type="short sequence motif" description="'KMSKS' region" evidence="1">
    <location>
        <begin position="259"/>
        <end position="263"/>
    </location>
</feature>
<feature type="binding site" evidence="1">
    <location>
        <position position="262"/>
    </location>
    <ligand>
        <name>ATP</name>
        <dbReference type="ChEBI" id="CHEBI:30616"/>
    </ligand>
</feature>
<evidence type="ECO:0000255" key="1">
    <source>
        <dbReference type="HAMAP-Rule" id="MF_00022"/>
    </source>
</evidence>
<dbReference type="EC" id="6.1.1.17" evidence="1"/>
<dbReference type="EMBL" id="CP000033">
    <property type="protein sequence ID" value="AAV42239.1"/>
    <property type="molecule type" value="Genomic_DNA"/>
</dbReference>
<dbReference type="RefSeq" id="WP_011254122.1">
    <property type="nucleotide sequence ID" value="NC_006814.3"/>
</dbReference>
<dbReference type="RefSeq" id="YP_193270.1">
    <property type="nucleotide sequence ID" value="NC_006814.3"/>
</dbReference>
<dbReference type="SMR" id="Q5FM35"/>
<dbReference type="STRING" id="272621.LBA0347"/>
<dbReference type="KEGG" id="lac:LBA0347"/>
<dbReference type="PATRIC" id="fig|272621.13.peg.333"/>
<dbReference type="eggNOG" id="COG0008">
    <property type="taxonomic scope" value="Bacteria"/>
</dbReference>
<dbReference type="HOGENOM" id="CLU_015768_6_1_9"/>
<dbReference type="OrthoDB" id="9807503at2"/>
<dbReference type="BioCyc" id="LACI272621:G1G49-341-MONOMER"/>
<dbReference type="Proteomes" id="UP000006381">
    <property type="component" value="Chromosome"/>
</dbReference>
<dbReference type="GO" id="GO:0005829">
    <property type="term" value="C:cytosol"/>
    <property type="evidence" value="ECO:0007669"/>
    <property type="project" value="TreeGrafter"/>
</dbReference>
<dbReference type="GO" id="GO:0005524">
    <property type="term" value="F:ATP binding"/>
    <property type="evidence" value="ECO:0007669"/>
    <property type="project" value="UniProtKB-UniRule"/>
</dbReference>
<dbReference type="GO" id="GO:0004818">
    <property type="term" value="F:glutamate-tRNA ligase activity"/>
    <property type="evidence" value="ECO:0007669"/>
    <property type="project" value="UniProtKB-UniRule"/>
</dbReference>
<dbReference type="GO" id="GO:0000049">
    <property type="term" value="F:tRNA binding"/>
    <property type="evidence" value="ECO:0007669"/>
    <property type="project" value="InterPro"/>
</dbReference>
<dbReference type="GO" id="GO:0008270">
    <property type="term" value="F:zinc ion binding"/>
    <property type="evidence" value="ECO:0007669"/>
    <property type="project" value="InterPro"/>
</dbReference>
<dbReference type="GO" id="GO:0006424">
    <property type="term" value="P:glutamyl-tRNA aminoacylation"/>
    <property type="evidence" value="ECO:0007669"/>
    <property type="project" value="UniProtKB-UniRule"/>
</dbReference>
<dbReference type="CDD" id="cd00808">
    <property type="entry name" value="GluRS_core"/>
    <property type="match status" value="1"/>
</dbReference>
<dbReference type="FunFam" id="3.40.50.620:FF:000007">
    <property type="entry name" value="Glutamate--tRNA ligase"/>
    <property type="match status" value="1"/>
</dbReference>
<dbReference type="Gene3D" id="1.10.10.350">
    <property type="match status" value="1"/>
</dbReference>
<dbReference type="Gene3D" id="3.40.50.620">
    <property type="entry name" value="HUPs"/>
    <property type="match status" value="1"/>
</dbReference>
<dbReference type="HAMAP" id="MF_00022">
    <property type="entry name" value="Glu_tRNA_synth_type1"/>
    <property type="match status" value="1"/>
</dbReference>
<dbReference type="InterPro" id="IPR045462">
    <property type="entry name" value="aa-tRNA-synth_I_cd-bd"/>
</dbReference>
<dbReference type="InterPro" id="IPR020751">
    <property type="entry name" value="aa-tRNA-synth_I_codon-bd_sub2"/>
</dbReference>
<dbReference type="InterPro" id="IPR001412">
    <property type="entry name" value="aa-tRNA-synth_I_CS"/>
</dbReference>
<dbReference type="InterPro" id="IPR008925">
    <property type="entry name" value="aa_tRNA-synth_I_cd-bd_sf"/>
</dbReference>
<dbReference type="InterPro" id="IPR004527">
    <property type="entry name" value="Glu-tRNA-ligase_bac/mito"/>
</dbReference>
<dbReference type="InterPro" id="IPR000924">
    <property type="entry name" value="Glu/Gln-tRNA-synth"/>
</dbReference>
<dbReference type="InterPro" id="IPR020058">
    <property type="entry name" value="Glu/Gln-tRNA-synth_Ib_cat-dom"/>
</dbReference>
<dbReference type="InterPro" id="IPR049940">
    <property type="entry name" value="GluQ/Sye"/>
</dbReference>
<dbReference type="InterPro" id="IPR033910">
    <property type="entry name" value="GluRS_core"/>
</dbReference>
<dbReference type="InterPro" id="IPR014729">
    <property type="entry name" value="Rossmann-like_a/b/a_fold"/>
</dbReference>
<dbReference type="NCBIfam" id="TIGR00464">
    <property type="entry name" value="gltX_bact"/>
    <property type="match status" value="1"/>
</dbReference>
<dbReference type="PANTHER" id="PTHR43311">
    <property type="entry name" value="GLUTAMATE--TRNA LIGASE"/>
    <property type="match status" value="1"/>
</dbReference>
<dbReference type="PANTHER" id="PTHR43311:SF2">
    <property type="entry name" value="GLUTAMATE--TRNA LIGASE, MITOCHONDRIAL-RELATED"/>
    <property type="match status" value="1"/>
</dbReference>
<dbReference type="Pfam" id="PF19269">
    <property type="entry name" value="Anticodon_2"/>
    <property type="match status" value="1"/>
</dbReference>
<dbReference type="Pfam" id="PF00749">
    <property type="entry name" value="tRNA-synt_1c"/>
    <property type="match status" value="1"/>
</dbReference>
<dbReference type="PRINTS" id="PR00987">
    <property type="entry name" value="TRNASYNTHGLU"/>
</dbReference>
<dbReference type="SUPFAM" id="SSF48163">
    <property type="entry name" value="An anticodon-binding domain of class I aminoacyl-tRNA synthetases"/>
    <property type="match status" value="1"/>
</dbReference>
<dbReference type="SUPFAM" id="SSF52374">
    <property type="entry name" value="Nucleotidylyl transferase"/>
    <property type="match status" value="1"/>
</dbReference>
<dbReference type="PROSITE" id="PS00178">
    <property type="entry name" value="AA_TRNA_LIGASE_I"/>
    <property type="match status" value="1"/>
</dbReference>